<comment type="function">
    <text evidence="1">Specifically methylates position 2 of adenine 2503 in 23S rRNA and position 2 of adenine 37 in tRNAs. m2A2503 modification seems to play a crucial role in the proofreading step occurring at the peptidyl transferase center and thus would serve to optimize ribosomal fidelity.</text>
</comment>
<comment type="catalytic activity">
    <reaction evidence="1">
        <text>adenosine(2503) in 23S rRNA + 2 reduced [2Fe-2S]-[ferredoxin] + 2 S-adenosyl-L-methionine = 2-methyladenosine(2503) in 23S rRNA + 5'-deoxyadenosine + L-methionine + 2 oxidized [2Fe-2S]-[ferredoxin] + S-adenosyl-L-homocysteine</text>
        <dbReference type="Rhea" id="RHEA:42916"/>
        <dbReference type="Rhea" id="RHEA-COMP:10000"/>
        <dbReference type="Rhea" id="RHEA-COMP:10001"/>
        <dbReference type="Rhea" id="RHEA-COMP:10152"/>
        <dbReference type="Rhea" id="RHEA-COMP:10282"/>
        <dbReference type="ChEBI" id="CHEBI:17319"/>
        <dbReference type="ChEBI" id="CHEBI:33737"/>
        <dbReference type="ChEBI" id="CHEBI:33738"/>
        <dbReference type="ChEBI" id="CHEBI:57844"/>
        <dbReference type="ChEBI" id="CHEBI:57856"/>
        <dbReference type="ChEBI" id="CHEBI:59789"/>
        <dbReference type="ChEBI" id="CHEBI:74411"/>
        <dbReference type="ChEBI" id="CHEBI:74497"/>
        <dbReference type="EC" id="2.1.1.192"/>
    </reaction>
</comment>
<comment type="catalytic activity">
    <reaction evidence="1">
        <text>adenosine(37) in tRNA + 2 reduced [2Fe-2S]-[ferredoxin] + 2 S-adenosyl-L-methionine = 2-methyladenosine(37) in tRNA + 5'-deoxyadenosine + L-methionine + 2 oxidized [2Fe-2S]-[ferredoxin] + S-adenosyl-L-homocysteine</text>
        <dbReference type="Rhea" id="RHEA:43332"/>
        <dbReference type="Rhea" id="RHEA-COMP:10000"/>
        <dbReference type="Rhea" id="RHEA-COMP:10001"/>
        <dbReference type="Rhea" id="RHEA-COMP:10162"/>
        <dbReference type="Rhea" id="RHEA-COMP:10485"/>
        <dbReference type="ChEBI" id="CHEBI:17319"/>
        <dbReference type="ChEBI" id="CHEBI:33737"/>
        <dbReference type="ChEBI" id="CHEBI:33738"/>
        <dbReference type="ChEBI" id="CHEBI:57844"/>
        <dbReference type="ChEBI" id="CHEBI:57856"/>
        <dbReference type="ChEBI" id="CHEBI:59789"/>
        <dbReference type="ChEBI" id="CHEBI:74411"/>
        <dbReference type="ChEBI" id="CHEBI:74497"/>
        <dbReference type="EC" id="2.1.1.192"/>
    </reaction>
</comment>
<comment type="cofactor">
    <cofactor evidence="1">
        <name>[4Fe-4S] cluster</name>
        <dbReference type="ChEBI" id="CHEBI:49883"/>
    </cofactor>
    <text evidence="1">Binds 1 [4Fe-4S] cluster. The cluster is coordinated with 3 cysteines and an exchangeable S-adenosyl-L-methionine.</text>
</comment>
<comment type="subcellular location">
    <subcellularLocation>
        <location evidence="1">Cytoplasm</location>
    </subcellularLocation>
</comment>
<comment type="miscellaneous">
    <text evidence="1">Reaction proceeds by a ping-pong mechanism involving intermediate methylation of a conserved cysteine residue.</text>
</comment>
<comment type="similarity">
    <text evidence="1">Belongs to the radical SAM superfamily. RlmN family.</text>
</comment>
<accession>Q4UUL5</accession>
<feature type="chain" id="PRO_0000350527" description="Dual-specificity RNA methyltransferase RlmN">
    <location>
        <begin position="1"/>
        <end position="401"/>
    </location>
</feature>
<feature type="domain" description="Radical SAM core" evidence="2">
    <location>
        <begin position="120"/>
        <end position="365"/>
    </location>
</feature>
<feature type="active site" description="Proton acceptor" evidence="1">
    <location>
        <position position="114"/>
    </location>
</feature>
<feature type="active site" description="S-methylcysteine intermediate" evidence="1">
    <location>
        <position position="370"/>
    </location>
</feature>
<feature type="binding site" evidence="1">
    <location>
        <position position="134"/>
    </location>
    <ligand>
        <name>[4Fe-4S] cluster</name>
        <dbReference type="ChEBI" id="CHEBI:49883"/>
        <note>4Fe-4S-S-AdoMet</note>
    </ligand>
</feature>
<feature type="binding site" evidence="1">
    <location>
        <position position="138"/>
    </location>
    <ligand>
        <name>[4Fe-4S] cluster</name>
        <dbReference type="ChEBI" id="CHEBI:49883"/>
        <note>4Fe-4S-S-AdoMet</note>
    </ligand>
</feature>
<feature type="binding site" evidence="1">
    <location>
        <position position="141"/>
    </location>
    <ligand>
        <name>[4Fe-4S] cluster</name>
        <dbReference type="ChEBI" id="CHEBI:49883"/>
        <note>4Fe-4S-S-AdoMet</note>
    </ligand>
</feature>
<feature type="binding site" evidence="1">
    <location>
        <begin position="187"/>
        <end position="188"/>
    </location>
    <ligand>
        <name>S-adenosyl-L-methionine</name>
        <dbReference type="ChEBI" id="CHEBI:59789"/>
    </ligand>
</feature>
<feature type="binding site" evidence="1">
    <location>
        <position position="219"/>
    </location>
    <ligand>
        <name>S-adenosyl-L-methionine</name>
        <dbReference type="ChEBI" id="CHEBI:59789"/>
    </ligand>
</feature>
<feature type="binding site" evidence="1">
    <location>
        <begin position="241"/>
        <end position="243"/>
    </location>
    <ligand>
        <name>S-adenosyl-L-methionine</name>
        <dbReference type="ChEBI" id="CHEBI:59789"/>
    </ligand>
</feature>
<feature type="binding site" evidence="1">
    <location>
        <position position="327"/>
    </location>
    <ligand>
        <name>S-adenosyl-L-methionine</name>
        <dbReference type="ChEBI" id="CHEBI:59789"/>
    </ligand>
</feature>
<feature type="disulfide bond" description="(transient)" evidence="1">
    <location>
        <begin position="127"/>
        <end position="370"/>
    </location>
</feature>
<gene>
    <name evidence="1" type="primary">rlmN</name>
    <name type="ordered locus">XC_2202</name>
</gene>
<sequence length="401" mass="44831">MNEVVIPSVLLDVPVSAAPVHKQNLLDLDREGLEHFFADTLGEARYRAHQVMKWIHHRYVTDFDQMTDLGKALRAKLHQHAEVLVPNVVFDKPSTDGTHKWLLAMGTDGKNAIETVYIPDKGRGTLCVSSQVGCGLNCTFCSTATQGFNRNLTTAEIIGQVWVAARHLGNVPHQQRRLTNVVMMGMGEPLMNFDNVVRAMSVMRDDLGYGLASKRVTLSTSGLVPMIDRLATESDVSLAVSLHAANDVLRESLVPLNKKYPIAELMESCARYLRGNKKRDSVTFEYTLMKGINDQPEHARQLARLMRQFDNAVQSKDAGKVNLIPFNPFPGTRYERSGETEIRAFQKILLDAQVLTMVRRTRGDDIDAACGQLKGQVMDRTRRQAEFRRTLEGQADRDAAA</sequence>
<name>RLMN_XANC8</name>
<reference key="1">
    <citation type="journal article" date="2005" name="Genome Res.">
        <title>Comparative and functional genomic analyses of the pathogenicity of phytopathogen Xanthomonas campestris pv. campestris.</title>
        <authorList>
            <person name="Qian W."/>
            <person name="Jia Y."/>
            <person name="Ren S.-X."/>
            <person name="He Y.-Q."/>
            <person name="Feng J.-X."/>
            <person name="Lu L.-F."/>
            <person name="Sun Q."/>
            <person name="Ying G."/>
            <person name="Tang D.-J."/>
            <person name="Tang H."/>
            <person name="Wu W."/>
            <person name="Hao P."/>
            <person name="Wang L."/>
            <person name="Jiang B.-L."/>
            <person name="Zeng S."/>
            <person name="Gu W.-Y."/>
            <person name="Lu G."/>
            <person name="Rong L."/>
            <person name="Tian Y."/>
            <person name="Yao Z."/>
            <person name="Fu G."/>
            <person name="Chen B."/>
            <person name="Fang R."/>
            <person name="Qiang B."/>
            <person name="Chen Z."/>
            <person name="Zhao G.-P."/>
            <person name="Tang J.-L."/>
            <person name="He C."/>
        </authorList>
    </citation>
    <scope>NUCLEOTIDE SEQUENCE [LARGE SCALE GENOMIC DNA]</scope>
    <source>
        <strain>8004</strain>
    </source>
</reference>
<organism>
    <name type="scientific">Xanthomonas campestris pv. campestris (strain 8004)</name>
    <dbReference type="NCBI Taxonomy" id="314565"/>
    <lineage>
        <taxon>Bacteria</taxon>
        <taxon>Pseudomonadati</taxon>
        <taxon>Pseudomonadota</taxon>
        <taxon>Gammaproteobacteria</taxon>
        <taxon>Lysobacterales</taxon>
        <taxon>Lysobacteraceae</taxon>
        <taxon>Xanthomonas</taxon>
    </lineage>
</organism>
<protein>
    <recommendedName>
        <fullName evidence="1">Dual-specificity RNA methyltransferase RlmN</fullName>
        <ecNumber evidence="1">2.1.1.192</ecNumber>
    </recommendedName>
    <alternativeName>
        <fullName evidence="1">23S rRNA (adenine(2503)-C(2))-methyltransferase</fullName>
    </alternativeName>
    <alternativeName>
        <fullName evidence="1">23S rRNA m2A2503 methyltransferase</fullName>
    </alternativeName>
    <alternativeName>
        <fullName evidence="1">Ribosomal RNA large subunit methyltransferase N</fullName>
    </alternativeName>
    <alternativeName>
        <fullName evidence="1">tRNA (adenine(37)-C(2))-methyltransferase</fullName>
    </alternativeName>
    <alternativeName>
        <fullName evidence="1">tRNA m2A37 methyltransferase</fullName>
    </alternativeName>
</protein>
<dbReference type="EC" id="2.1.1.192" evidence="1"/>
<dbReference type="EMBL" id="CP000050">
    <property type="protein sequence ID" value="AAY49258.1"/>
    <property type="molecule type" value="Genomic_DNA"/>
</dbReference>
<dbReference type="RefSeq" id="WP_011037145.1">
    <property type="nucleotide sequence ID" value="NZ_CP155948.1"/>
</dbReference>
<dbReference type="SMR" id="Q4UUL5"/>
<dbReference type="KEGG" id="xcb:XC_2202"/>
<dbReference type="HOGENOM" id="CLU_029101_0_0_6"/>
<dbReference type="Proteomes" id="UP000000420">
    <property type="component" value="Chromosome"/>
</dbReference>
<dbReference type="GO" id="GO:0005737">
    <property type="term" value="C:cytoplasm"/>
    <property type="evidence" value="ECO:0007669"/>
    <property type="project" value="UniProtKB-SubCell"/>
</dbReference>
<dbReference type="GO" id="GO:0051539">
    <property type="term" value="F:4 iron, 4 sulfur cluster binding"/>
    <property type="evidence" value="ECO:0007669"/>
    <property type="project" value="UniProtKB-UniRule"/>
</dbReference>
<dbReference type="GO" id="GO:0046872">
    <property type="term" value="F:metal ion binding"/>
    <property type="evidence" value="ECO:0007669"/>
    <property type="project" value="UniProtKB-KW"/>
</dbReference>
<dbReference type="GO" id="GO:0070040">
    <property type="term" value="F:rRNA (adenine(2503)-C2-)-methyltransferase activity"/>
    <property type="evidence" value="ECO:0007669"/>
    <property type="project" value="UniProtKB-UniRule"/>
</dbReference>
<dbReference type="GO" id="GO:0019843">
    <property type="term" value="F:rRNA binding"/>
    <property type="evidence" value="ECO:0007669"/>
    <property type="project" value="UniProtKB-UniRule"/>
</dbReference>
<dbReference type="GO" id="GO:0002935">
    <property type="term" value="F:tRNA (adenine(37)-C2)-methyltransferase activity"/>
    <property type="evidence" value="ECO:0007669"/>
    <property type="project" value="UniProtKB-UniRule"/>
</dbReference>
<dbReference type="GO" id="GO:0000049">
    <property type="term" value="F:tRNA binding"/>
    <property type="evidence" value="ECO:0007669"/>
    <property type="project" value="UniProtKB-UniRule"/>
</dbReference>
<dbReference type="GO" id="GO:0070475">
    <property type="term" value="P:rRNA base methylation"/>
    <property type="evidence" value="ECO:0007669"/>
    <property type="project" value="UniProtKB-UniRule"/>
</dbReference>
<dbReference type="GO" id="GO:0030488">
    <property type="term" value="P:tRNA methylation"/>
    <property type="evidence" value="ECO:0007669"/>
    <property type="project" value="UniProtKB-UniRule"/>
</dbReference>
<dbReference type="CDD" id="cd01335">
    <property type="entry name" value="Radical_SAM"/>
    <property type="match status" value="1"/>
</dbReference>
<dbReference type="FunFam" id="1.10.150.530:FF:000003">
    <property type="entry name" value="Dual-specificity RNA methyltransferase RlmN"/>
    <property type="match status" value="1"/>
</dbReference>
<dbReference type="FunFam" id="3.20.20.70:FF:000008">
    <property type="entry name" value="Dual-specificity RNA methyltransferase RlmN"/>
    <property type="match status" value="1"/>
</dbReference>
<dbReference type="Gene3D" id="1.10.150.530">
    <property type="match status" value="1"/>
</dbReference>
<dbReference type="Gene3D" id="3.20.20.70">
    <property type="entry name" value="Aldolase class I"/>
    <property type="match status" value="1"/>
</dbReference>
<dbReference type="HAMAP" id="MF_01849">
    <property type="entry name" value="RNA_methyltr_RlmN"/>
    <property type="match status" value="1"/>
</dbReference>
<dbReference type="InterPro" id="IPR013785">
    <property type="entry name" value="Aldolase_TIM"/>
</dbReference>
<dbReference type="InterPro" id="IPR040072">
    <property type="entry name" value="Methyltransferase_A"/>
</dbReference>
<dbReference type="InterPro" id="IPR048641">
    <property type="entry name" value="RlmN_N"/>
</dbReference>
<dbReference type="InterPro" id="IPR027492">
    <property type="entry name" value="RNA_MTrfase_RlmN"/>
</dbReference>
<dbReference type="InterPro" id="IPR004383">
    <property type="entry name" value="rRNA_lsu_MTrfase_RlmN/Cfr"/>
</dbReference>
<dbReference type="InterPro" id="IPR007197">
    <property type="entry name" value="rSAM"/>
</dbReference>
<dbReference type="NCBIfam" id="TIGR00048">
    <property type="entry name" value="rRNA_mod_RlmN"/>
    <property type="match status" value="1"/>
</dbReference>
<dbReference type="PANTHER" id="PTHR30544">
    <property type="entry name" value="23S RRNA METHYLTRANSFERASE"/>
    <property type="match status" value="1"/>
</dbReference>
<dbReference type="PANTHER" id="PTHR30544:SF5">
    <property type="entry name" value="RADICAL SAM CORE DOMAIN-CONTAINING PROTEIN"/>
    <property type="match status" value="1"/>
</dbReference>
<dbReference type="Pfam" id="PF04055">
    <property type="entry name" value="Radical_SAM"/>
    <property type="match status" value="1"/>
</dbReference>
<dbReference type="Pfam" id="PF21016">
    <property type="entry name" value="RlmN_N"/>
    <property type="match status" value="1"/>
</dbReference>
<dbReference type="PIRSF" id="PIRSF006004">
    <property type="entry name" value="CHP00048"/>
    <property type="match status" value="1"/>
</dbReference>
<dbReference type="SFLD" id="SFLDF00275">
    <property type="entry name" value="adenosine_C2_methyltransferase"/>
    <property type="match status" value="1"/>
</dbReference>
<dbReference type="SFLD" id="SFLDS00029">
    <property type="entry name" value="Radical_SAM"/>
    <property type="match status" value="1"/>
</dbReference>
<dbReference type="SUPFAM" id="SSF102114">
    <property type="entry name" value="Radical SAM enzymes"/>
    <property type="match status" value="1"/>
</dbReference>
<dbReference type="PROSITE" id="PS51918">
    <property type="entry name" value="RADICAL_SAM"/>
    <property type="match status" value="1"/>
</dbReference>
<evidence type="ECO:0000255" key="1">
    <source>
        <dbReference type="HAMAP-Rule" id="MF_01849"/>
    </source>
</evidence>
<evidence type="ECO:0000255" key="2">
    <source>
        <dbReference type="PROSITE-ProRule" id="PRU01266"/>
    </source>
</evidence>
<keyword id="KW-0004">4Fe-4S</keyword>
<keyword id="KW-0963">Cytoplasm</keyword>
<keyword id="KW-1015">Disulfide bond</keyword>
<keyword id="KW-0408">Iron</keyword>
<keyword id="KW-0411">Iron-sulfur</keyword>
<keyword id="KW-0479">Metal-binding</keyword>
<keyword id="KW-0489">Methyltransferase</keyword>
<keyword id="KW-0698">rRNA processing</keyword>
<keyword id="KW-0949">S-adenosyl-L-methionine</keyword>
<keyword id="KW-0808">Transferase</keyword>
<keyword id="KW-0819">tRNA processing</keyword>
<proteinExistence type="inferred from homology"/>